<feature type="chain" id="PRO_0000098247" description="DNA translocase FtsK">
    <location>
        <begin position="1"/>
        <end position="794"/>
    </location>
</feature>
<feature type="transmembrane region" description="Helical" evidence="2">
    <location>
        <begin position="17"/>
        <end position="37"/>
    </location>
</feature>
<feature type="transmembrane region" description="Helical" evidence="2">
    <location>
        <begin position="59"/>
        <end position="79"/>
    </location>
</feature>
<feature type="transmembrane region" description="Helical" evidence="2">
    <location>
        <begin position="96"/>
        <end position="116"/>
    </location>
</feature>
<feature type="transmembrane region" description="Helical" evidence="2">
    <location>
        <begin position="129"/>
        <end position="149"/>
    </location>
</feature>
<feature type="transmembrane region" description="Helical" evidence="2">
    <location>
        <begin position="159"/>
        <end position="179"/>
    </location>
</feature>
<feature type="topological domain" description="Cytoplasmic" evidence="2">
    <location>
        <begin position="180"/>
        <end position="794"/>
    </location>
</feature>
<feature type="domain" description="FtsK" evidence="3">
    <location>
        <begin position="455"/>
        <end position="654"/>
    </location>
</feature>
<feature type="region of interest" description="Disordered" evidence="4">
    <location>
        <begin position="265"/>
        <end position="311"/>
    </location>
</feature>
<feature type="compositionally biased region" description="Low complexity" evidence="4">
    <location>
        <begin position="299"/>
        <end position="311"/>
    </location>
</feature>
<feature type="binding site" evidence="3">
    <location>
        <begin position="475"/>
        <end position="480"/>
    </location>
    <ligand>
        <name>ATP</name>
        <dbReference type="ChEBI" id="CHEBI:30616"/>
    </ligand>
</feature>
<evidence type="ECO:0000250" key="1"/>
<evidence type="ECO:0000255" key="2"/>
<evidence type="ECO:0000255" key="3">
    <source>
        <dbReference type="PROSITE-ProRule" id="PRU00289"/>
    </source>
</evidence>
<evidence type="ECO:0000256" key="4">
    <source>
        <dbReference type="SAM" id="MobiDB-lite"/>
    </source>
</evidence>
<evidence type="ECO:0000305" key="5"/>
<protein>
    <recommendedName>
        <fullName>DNA translocase FtsK</fullName>
    </recommendedName>
</protein>
<accession>Q9PLI7</accession>
<organism>
    <name type="scientific">Chlamydia muridarum (strain MoPn / Nigg)</name>
    <dbReference type="NCBI Taxonomy" id="243161"/>
    <lineage>
        <taxon>Bacteria</taxon>
        <taxon>Pseudomonadati</taxon>
        <taxon>Chlamydiota</taxon>
        <taxon>Chlamydiia</taxon>
        <taxon>Chlamydiales</taxon>
        <taxon>Chlamydiaceae</taxon>
        <taxon>Chlamydia/Chlamydophila group</taxon>
        <taxon>Chlamydia</taxon>
    </lineage>
</organism>
<sequence>MRKERKKASVSLSPQTVFAIKTCIYLALACFSGLSLWSFQHNQPYTQNWIGLLGWSLSSFLLYNFGVAAFLIPLYFGFLSFLNMKKTPAPLAFRKAVAFGTVPVCCAILLSMVSPAQNLPQFLATRVPMVVMDLQPPKAYLGGIPFYLLYDGNSFSLKLLIGAVGTGLIFLAILLCAICYLIPKSFVLKKKALLDALLKFLKNKSYACWSACKKLLKNLVNNKSYCPEPSLRVPAPSSFAKKEVLKLPTPVISLPLENKDLHDGDSSNRTIFLSPPHPAKRTLAPQKKPDLPDLLQKRTSSTPIPSSSPSPFIVAGEAPDLPQYHLLSKRNIRRPESLLEELKKKAAILQQTLASFGIDASIGNICSGPTLAAFEVLPNTGVKVQKIKALENDIALNLQASSIRIIAPIPGKAAVGIEIPNPDPQPVNFRDLLEDYQKGTQRLQVPLLLGKKANGDNFWTDLATMPHLIIAGTTGSGKSVCINTIVMSLIMTSPPTDVKLVIVDPKKVELTGYSQLPHMLTPVITESKEAHSALIWLVREMELRYEILRFLGLRNIQSFNSRTRNVDIEASYDKEIPEKMPFIVGIIDELSDLLLSSSHDIETPIVRLAQMARAVGIHLILATQRPSRDVITGLIKANFPSRIAFKVANKVNSQIIIDEPGAENLMGNGDMLVVSPGSFAPLRVQGAYICDDDINKVIKDLCSRFPCKYVIPSFDTYDDSSSMDPESLDPLFNQAKTLVLQTGNASTTFLQRKLKIGYARAASIIDQLEEARIVGPSEGAKPRQILVQLSNQED</sequence>
<dbReference type="EMBL" id="AE002160">
    <property type="protein sequence ID" value="AAF38991.1"/>
    <property type="molecule type" value="Genomic_DNA"/>
</dbReference>
<dbReference type="PIR" id="A81741">
    <property type="entry name" value="A81741"/>
</dbReference>
<dbReference type="RefSeq" id="WP_010229403.1">
    <property type="nucleotide sequence ID" value="NZ_CP063055.1"/>
</dbReference>
<dbReference type="SMR" id="Q9PLI7"/>
<dbReference type="GeneID" id="1245642"/>
<dbReference type="KEGG" id="cmu:TC_0112"/>
<dbReference type="eggNOG" id="COG1674">
    <property type="taxonomic scope" value="Bacteria"/>
</dbReference>
<dbReference type="HOGENOM" id="CLU_001981_9_7_0"/>
<dbReference type="OrthoDB" id="9807790at2"/>
<dbReference type="Proteomes" id="UP000000800">
    <property type="component" value="Chromosome"/>
</dbReference>
<dbReference type="GO" id="GO:0005886">
    <property type="term" value="C:plasma membrane"/>
    <property type="evidence" value="ECO:0007669"/>
    <property type="project" value="UniProtKB-SubCell"/>
</dbReference>
<dbReference type="GO" id="GO:0005524">
    <property type="term" value="F:ATP binding"/>
    <property type="evidence" value="ECO:0007669"/>
    <property type="project" value="UniProtKB-KW"/>
</dbReference>
<dbReference type="GO" id="GO:0016887">
    <property type="term" value="F:ATP hydrolysis activity"/>
    <property type="evidence" value="ECO:0007669"/>
    <property type="project" value="InterPro"/>
</dbReference>
<dbReference type="GO" id="GO:0003677">
    <property type="term" value="F:DNA binding"/>
    <property type="evidence" value="ECO:0007669"/>
    <property type="project" value="UniProtKB-KW"/>
</dbReference>
<dbReference type="GO" id="GO:0051301">
    <property type="term" value="P:cell division"/>
    <property type="evidence" value="ECO:0007669"/>
    <property type="project" value="UniProtKB-KW"/>
</dbReference>
<dbReference type="GO" id="GO:0007059">
    <property type="term" value="P:chromosome segregation"/>
    <property type="evidence" value="ECO:0007669"/>
    <property type="project" value="UniProtKB-KW"/>
</dbReference>
<dbReference type="Gene3D" id="3.30.980.40">
    <property type="match status" value="1"/>
</dbReference>
<dbReference type="Gene3D" id="3.40.50.300">
    <property type="entry name" value="P-loop containing nucleotide triphosphate hydrolases"/>
    <property type="match status" value="1"/>
</dbReference>
<dbReference type="Gene3D" id="1.10.10.10">
    <property type="entry name" value="Winged helix-like DNA-binding domain superfamily/Winged helix DNA-binding domain"/>
    <property type="match status" value="1"/>
</dbReference>
<dbReference type="InterPro" id="IPR003593">
    <property type="entry name" value="AAA+_ATPase"/>
</dbReference>
<dbReference type="InterPro" id="IPR050206">
    <property type="entry name" value="FtsK/SpoIIIE/SftA"/>
</dbReference>
<dbReference type="InterPro" id="IPR025199">
    <property type="entry name" value="FtsK_4TM"/>
</dbReference>
<dbReference type="InterPro" id="IPR041027">
    <property type="entry name" value="FtsK_alpha"/>
</dbReference>
<dbReference type="InterPro" id="IPR002543">
    <property type="entry name" value="FtsK_dom"/>
</dbReference>
<dbReference type="InterPro" id="IPR018541">
    <property type="entry name" value="Ftsk_gamma"/>
</dbReference>
<dbReference type="InterPro" id="IPR027417">
    <property type="entry name" value="P-loop_NTPase"/>
</dbReference>
<dbReference type="InterPro" id="IPR036388">
    <property type="entry name" value="WH-like_DNA-bd_sf"/>
</dbReference>
<dbReference type="InterPro" id="IPR036390">
    <property type="entry name" value="WH_DNA-bd_sf"/>
</dbReference>
<dbReference type="PANTHER" id="PTHR22683:SF41">
    <property type="entry name" value="DNA TRANSLOCASE FTSK"/>
    <property type="match status" value="1"/>
</dbReference>
<dbReference type="PANTHER" id="PTHR22683">
    <property type="entry name" value="SPORULATION PROTEIN RELATED"/>
    <property type="match status" value="1"/>
</dbReference>
<dbReference type="Pfam" id="PF13491">
    <property type="entry name" value="FtsK_4TM"/>
    <property type="match status" value="1"/>
</dbReference>
<dbReference type="Pfam" id="PF17854">
    <property type="entry name" value="FtsK_alpha"/>
    <property type="match status" value="1"/>
</dbReference>
<dbReference type="Pfam" id="PF09397">
    <property type="entry name" value="FtsK_gamma"/>
    <property type="match status" value="1"/>
</dbReference>
<dbReference type="Pfam" id="PF01580">
    <property type="entry name" value="FtsK_SpoIIIE"/>
    <property type="match status" value="1"/>
</dbReference>
<dbReference type="SMART" id="SM00382">
    <property type="entry name" value="AAA"/>
    <property type="match status" value="1"/>
</dbReference>
<dbReference type="SMART" id="SM00843">
    <property type="entry name" value="Ftsk_gamma"/>
    <property type="match status" value="1"/>
</dbReference>
<dbReference type="SUPFAM" id="SSF52540">
    <property type="entry name" value="P-loop containing nucleoside triphosphate hydrolases"/>
    <property type="match status" value="1"/>
</dbReference>
<dbReference type="SUPFAM" id="SSF46785">
    <property type="entry name" value="Winged helix' DNA-binding domain"/>
    <property type="match status" value="1"/>
</dbReference>
<dbReference type="PROSITE" id="PS50901">
    <property type="entry name" value="FTSK"/>
    <property type="match status" value="1"/>
</dbReference>
<keyword id="KW-0067">ATP-binding</keyword>
<keyword id="KW-0131">Cell cycle</keyword>
<keyword id="KW-0132">Cell division</keyword>
<keyword id="KW-0997">Cell inner membrane</keyword>
<keyword id="KW-1003">Cell membrane</keyword>
<keyword id="KW-0159">Chromosome partition</keyword>
<keyword id="KW-0238">DNA-binding</keyword>
<keyword id="KW-0472">Membrane</keyword>
<keyword id="KW-0547">Nucleotide-binding</keyword>
<keyword id="KW-0812">Transmembrane</keyword>
<keyword id="KW-1133">Transmembrane helix</keyword>
<proteinExistence type="inferred from homology"/>
<comment type="function">
    <text evidence="1">Essential cell division protein that coordinates cell division and chromosome segregation. The N-terminus is involved in assembly of the cell-division machinery. The C-terminus functions as a DNA motor that moves dsDNA in an ATP-dependent manner towards the dif recombination site, which is located within the replication terminus region. Required for activation of the Xer recombinase, allowing activation of chromosome unlinking by recombination (By similarity).</text>
</comment>
<comment type="subunit">
    <text evidence="1">Homohexamer. Forms a ring that surrounds DNA (By similarity).</text>
</comment>
<comment type="subcellular location">
    <subcellularLocation>
        <location evidence="1">Cell inner membrane</location>
        <topology evidence="1">Multi-pass membrane protein</topology>
    </subcellularLocation>
    <text evidence="1">Located at the septum.</text>
</comment>
<comment type="domain">
    <text evidence="1">Consists of an N-terminal domain, which is sufficient for the localization to the septal ring and is required for cell division, followed by a linker domain, and a C-terminal domain, which forms the translocation motor involved in chromosome segregation. The C-terminal domain can be further subdivided into alpha, beta and gamma subdomains. The alpha and beta subdomains form the DNA pump, and the gamma subdomain is a regulatory subdomain (By similarity).</text>
</comment>
<comment type="similarity">
    <text evidence="5">Belongs to the FtsK/SpoIIIE/SftA family.</text>
</comment>
<gene>
    <name type="primary">ftsK</name>
    <name type="ordered locus">TC_0112</name>
</gene>
<reference key="1">
    <citation type="journal article" date="2000" name="Nucleic Acids Res.">
        <title>Genome sequences of Chlamydia trachomatis MoPn and Chlamydia pneumoniae AR39.</title>
        <authorList>
            <person name="Read T.D."/>
            <person name="Brunham R.C."/>
            <person name="Shen C."/>
            <person name="Gill S.R."/>
            <person name="Heidelberg J.F."/>
            <person name="White O."/>
            <person name="Hickey E.K."/>
            <person name="Peterson J.D."/>
            <person name="Utterback T.R."/>
            <person name="Berry K.J."/>
            <person name="Bass S."/>
            <person name="Linher K.D."/>
            <person name="Weidman J.F."/>
            <person name="Khouri H.M."/>
            <person name="Craven B."/>
            <person name="Bowman C."/>
            <person name="Dodson R.J."/>
            <person name="Gwinn M.L."/>
            <person name="Nelson W.C."/>
            <person name="DeBoy R.T."/>
            <person name="Kolonay J.F."/>
            <person name="McClarty G."/>
            <person name="Salzberg S.L."/>
            <person name="Eisen J.A."/>
            <person name="Fraser C.M."/>
        </authorList>
    </citation>
    <scope>NUCLEOTIDE SEQUENCE [LARGE SCALE GENOMIC DNA]</scope>
    <source>
        <strain>MoPn / Nigg</strain>
    </source>
</reference>
<name>FTSK_CHLMU</name>